<reference evidence="22" key="1">
    <citation type="submission" date="1999-05" db="EMBL/GenBank/DDBJ databases">
        <title>Drosophila homolog of the human G4.5 gene encoding tafazzin proteins.</title>
        <authorList>
            <person name="Benevolenskaya E.V."/>
            <person name="Frolov M.V."/>
            <person name="Birchler J.A."/>
        </authorList>
    </citation>
    <scope>NUCLEOTIDE SEQUENCE [MRNA] (ISOFORM A)</scope>
    <source>
        <strain>Canton-S</strain>
    </source>
</reference>
<reference key="2">
    <citation type="journal article" date="2000" name="Science">
        <title>The genome sequence of Drosophila melanogaster.</title>
        <authorList>
            <person name="Adams M.D."/>
            <person name="Celniker S.E."/>
            <person name="Holt R.A."/>
            <person name="Evans C.A."/>
            <person name="Gocayne J.D."/>
            <person name="Amanatides P.G."/>
            <person name="Scherer S.E."/>
            <person name="Li P.W."/>
            <person name="Hoskins R.A."/>
            <person name="Galle R.F."/>
            <person name="George R.A."/>
            <person name="Lewis S.E."/>
            <person name="Richards S."/>
            <person name="Ashburner M."/>
            <person name="Henderson S.N."/>
            <person name="Sutton G.G."/>
            <person name="Wortman J.R."/>
            <person name="Yandell M.D."/>
            <person name="Zhang Q."/>
            <person name="Chen L.X."/>
            <person name="Brandon R.C."/>
            <person name="Rogers Y.-H.C."/>
            <person name="Blazej R.G."/>
            <person name="Champe M."/>
            <person name="Pfeiffer B.D."/>
            <person name="Wan K.H."/>
            <person name="Doyle C."/>
            <person name="Baxter E.G."/>
            <person name="Helt G."/>
            <person name="Nelson C.R."/>
            <person name="Miklos G.L.G."/>
            <person name="Abril J.F."/>
            <person name="Agbayani A."/>
            <person name="An H.-J."/>
            <person name="Andrews-Pfannkoch C."/>
            <person name="Baldwin D."/>
            <person name="Ballew R.M."/>
            <person name="Basu A."/>
            <person name="Baxendale J."/>
            <person name="Bayraktaroglu L."/>
            <person name="Beasley E.M."/>
            <person name="Beeson K.Y."/>
            <person name="Benos P.V."/>
            <person name="Berman B.P."/>
            <person name="Bhandari D."/>
            <person name="Bolshakov S."/>
            <person name="Borkova D."/>
            <person name="Botchan M.R."/>
            <person name="Bouck J."/>
            <person name="Brokstein P."/>
            <person name="Brottier P."/>
            <person name="Burtis K.C."/>
            <person name="Busam D.A."/>
            <person name="Butler H."/>
            <person name="Cadieu E."/>
            <person name="Center A."/>
            <person name="Chandra I."/>
            <person name="Cherry J.M."/>
            <person name="Cawley S."/>
            <person name="Dahlke C."/>
            <person name="Davenport L.B."/>
            <person name="Davies P."/>
            <person name="de Pablos B."/>
            <person name="Delcher A."/>
            <person name="Deng Z."/>
            <person name="Mays A.D."/>
            <person name="Dew I."/>
            <person name="Dietz S.M."/>
            <person name="Dodson K."/>
            <person name="Doup L.E."/>
            <person name="Downes M."/>
            <person name="Dugan-Rocha S."/>
            <person name="Dunkov B.C."/>
            <person name="Dunn P."/>
            <person name="Durbin K.J."/>
            <person name="Evangelista C.C."/>
            <person name="Ferraz C."/>
            <person name="Ferriera S."/>
            <person name="Fleischmann W."/>
            <person name="Fosler C."/>
            <person name="Gabrielian A.E."/>
            <person name="Garg N.S."/>
            <person name="Gelbart W.M."/>
            <person name="Glasser K."/>
            <person name="Glodek A."/>
            <person name="Gong F."/>
            <person name="Gorrell J.H."/>
            <person name="Gu Z."/>
            <person name="Guan P."/>
            <person name="Harris M."/>
            <person name="Harris N.L."/>
            <person name="Harvey D.A."/>
            <person name="Heiman T.J."/>
            <person name="Hernandez J.R."/>
            <person name="Houck J."/>
            <person name="Hostin D."/>
            <person name="Houston K.A."/>
            <person name="Howland T.J."/>
            <person name="Wei M.-H."/>
            <person name="Ibegwam C."/>
            <person name="Jalali M."/>
            <person name="Kalush F."/>
            <person name="Karpen G.H."/>
            <person name="Ke Z."/>
            <person name="Kennison J.A."/>
            <person name="Ketchum K.A."/>
            <person name="Kimmel B.E."/>
            <person name="Kodira C.D."/>
            <person name="Kraft C.L."/>
            <person name="Kravitz S."/>
            <person name="Kulp D."/>
            <person name="Lai Z."/>
            <person name="Lasko P."/>
            <person name="Lei Y."/>
            <person name="Levitsky A.A."/>
            <person name="Li J.H."/>
            <person name="Li Z."/>
            <person name="Liang Y."/>
            <person name="Lin X."/>
            <person name="Liu X."/>
            <person name="Mattei B."/>
            <person name="McIntosh T.C."/>
            <person name="McLeod M.P."/>
            <person name="McPherson D."/>
            <person name="Merkulov G."/>
            <person name="Milshina N.V."/>
            <person name="Mobarry C."/>
            <person name="Morris J."/>
            <person name="Moshrefi A."/>
            <person name="Mount S.M."/>
            <person name="Moy M."/>
            <person name="Murphy B."/>
            <person name="Murphy L."/>
            <person name="Muzny D.M."/>
            <person name="Nelson D.L."/>
            <person name="Nelson D.R."/>
            <person name="Nelson K.A."/>
            <person name="Nixon K."/>
            <person name="Nusskern D.R."/>
            <person name="Pacleb J.M."/>
            <person name="Palazzolo M."/>
            <person name="Pittman G.S."/>
            <person name="Pan S."/>
            <person name="Pollard J."/>
            <person name="Puri V."/>
            <person name="Reese M.G."/>
            <person name="Reinert K."/>
            <person name="Remington K."/>
            <person name="Saunders R.D.C."/>
            <person name="Scheeler F."/>
            <person name="Shen H."/>
            <person name="Shue B.C."/>
            <person name="Siden-Kiamos I."/>
            <person name="Simpson M."/>
            <person name="Skupski M.P."/>
            <person name="Smith T.J."/>
            <person name="Spier E."/>
            <person name="Spradling A.C."/>
            <person name="Stapleton M."/>
            <person name="Strong R."/>
            <person name="Sun E."/>
            <person name="Svirskas R."/>
            <person name="Tector C."/>
            <person name="Turner R."/>
            <person name="Venter E."/>
            <person name="Wang A.H."/>
            <person name="Wang X."/>
            <person name="Wang Z.-Y."/>
            <person name="Wassarman D.A."/>
            <person name="Weinstock G.M."/>
            <person name="Weissenbach J."/>
            <person name="Williams S.M."/>
            <person name="Woodage T."/>
            <person name="Worley K.C."/>
            <person name="Wu D."/>
            <person name="Yang S."/>
            <person name="Yao Q.A."/>
            <person name="Ye J."/>
            <person name="Yeh R.-F."/>
            <person name="Zaveri J.S."/>
            <person name="Zhan M."/>
            <person name="Zhang G."/>
            <person name="Zhao Q."/>
            <person name="Zheng L."/>
            <person name="Zheng X.H."/>
            <person name="Zhong F.N."/>
            <person name="Zhong W."/>
            <person name="Zhou X."/>
            <person name="Zhu S.C."/>
            <person name="Zhu X."/>
            <person name="Smith H.O."/>
            <person name="Gibbs R.A."/>
            <person name="Myers E.W."/>
            <person name="Rubin G.M."/>
            <person name="Venter J.C."/>
        </authorList>
    </citation>
    <scope>NUCLEOTIDE SEQUENCE [LARGE SCALE GENOMIC DNA]</scope>
    <source>
        <strain>Berkeley</strain>
    </source>
</reference>
<reference key="3">
    <citation type="journal article" date="2002" name="Genome Biol.">
        <title>Annotation of the Drosophila melanogaster euchromatic genome: a systematic review.</title>
        <authorList>
            <person name="Misra S."/>
            <person name="Crosby M.A."/>
            <person name="Mungall C.J."/>
            <person name="Matthews B.B."/>
            <person name="Campbell K.S."/>
            <person name="Hradecky P."/>
            <person name="Huang Y."/>
            <person name="Kaminker J.S."/>
            <person name="Millburn G.H."/>
            <person name="Prochnik S.E."/>
            <person name="Smith C.D."/>
            <person name="Tupy J.L."/>
            <person name="Whitfield E.J."/>
            <person name="Bayraktaroglu L."/>
            <person name="Berman B.P."/>
            <person name="Bettencourt B.R."/>
            <person name="Celniker S.E."/>
            <person name="de Grey A.D.N.J."/>
            <person name="Drysdale R.A."/>
            <person name="Harris N.L."/>
            <person name="Richter J."/>
            <person name="Russo S."/>
            <person name="Schroeder A.J."/>
            <person name="Shu S.Q."/>
            <person name="Stapleton M."/>
            <person name="Yamada C."/>
            <person name="Ashburner M."/>
            <person name="Gelbart W.M."/>
            <person name="Rubin G.M."/>
            <person name="Lewis S.E."/>
        </authorList>
    </citation>
    <scope>GENOME REANNOTATION</scope>
    <scope>ALTERNATIVE SPLICING</scope>
    <source>
        <strain>Berkeley</strain>
    </source>
</reference>
<reference key="4">
    <citation type="journal article" date="2002" name="Genome Biol.">
        <title>A Drosophila full-length cDNA resource.</title>
        <authorList>
            <person name="Stapleton M."/>
            <person name="Carlson J.W."/>
            <person name="Brokstein P."/>
            <person name="Yu C."/>
            <person name="Champe M."/>
            <person name="George R.A."/>
            <person name="Guarin H."/>
            <person name="Kronmiller B."/>
            <person name="Pacleb J.M."/>
            <person name="Park S."/>
            <person name="Wan K.H."/>
            <person name="Rubin G.M."/>
            <person name="Celniker S.E."/>
        </authorList>
    </citation>
    <scope>NUCLEOTIDE SEQUENCE [LARGE SCALE MRNA] (ISOFORM A)</scope>
    <source>
        <strain>Berkeley</strain>
        <tissue>Embryo</tissue>
    </source>
</reference>
<reference evidence="22" key="5">
    <citation type="journal article" date="2000" name="Genetics">
        <title>The oxen gene of Drosophila encodes a homolog of subunit 9 of yeast ubiquinol-cytochrome c oxidoreductase complex: evidence for modulation of gene expression in response to mitochondrial activity.</title>
        <authorList>
            <person name="Frolov M.V."/>
            <person name="Benevolenskaya E.V."/>
            <person name="Birchler J.A."/>
        </authorList>
    </citation>
    <scope>NUCLEOTIDE SEQUENCE [GENOMIC DNA] OF 1-39 (ISOFORM A)</scope>
    <source>
        <strain>Canton-S</strain>
    </source>
</reference>
<reference key="6">
    <citation type="journal article" date="2006" name="J. Biol. Chem.">
        <title>The enzymatic function of tafazzin.</title>
        <authorList>
            <person name="Xu Y."/>
            <person name="Malhotra A."/>
            <person name="Ren M."/>
            <person name="Schlame M."/>
        </authorList>
    </citation>
    <scope>FUNCTION</scope>
    <scope>CATALYTIC ACTIVITY (ISOFORM A)</scope>
    <scope>DISRUPTION PHENOTYPE</scope>
    <scope>SUBCELLULAR LOCATION</scope>
</reference>
<reference key="7">
    <citation type="journal article" date="2006" name="Proc. Natl. Acad. Sci. U.S.A.">
        <title>A Drosophila model of Barth syndrome.</title>
        <authorList>
            <person name="Xu Y."/>
            <person name="Condell M."/>
            <person name="Plesken H."/>
            <person name="Edelman-Novemsky I."/>
            <person name="Ma J."/>
            <person name="Ren M."/>
            <person name="Schlame M."/>
        </authorList>
    </citation>
    <scope>FUNCTION</scope>
    <scope>DISRUPTION PHENOTYPE</scope>
</reference>
<reference key="8">
    <citation type="journal article" date="2009" name="Biochim. Biophys. Acta">
        <title>Formation of molecular species of mitochondrial cardiolipin. 1. A novel transacylation mechanism to shuttle fatty acids between sn-1 and sn-2 positions of multiple phospholipid species.</title>
        <authorList>
            <person name="Malhotra A."/>
            <person name="Xu Y."/>
            <person name="Ren M."/>
            <person name="Schlame M."/>
        </authorList>
    </citation>
    <scope>FUNCTION</scope>
    <scope>CATALYTIC ACTIVITY (ISOFORM A)</scope>
</reference>
<reference key="9">
    <citation type="journal article" date="2009" name="J. Biol. Chem.">
        <title>Characterization of tafazzin splice variants from humans and fruit flies.</title>
        <authorList>
            <person name="Xu Y."/>
            <person name="Zhang S."/>
            <person name="Malhotra A."/>
            <person name="Edelman-Novemsky I."/>
            <person name="Ma J."/>
            <person name="Kruppa A."/>
            <person name="Cernicica C."/>
            <person name="Blais S."/>
            <person name="Neubert T.A."/>
            <person name="Ren M."/>
            <person name="Schlame M."/>
        </authorList>
    </citation>
    <scope>FUNCTION</scope>
    <scope>CATALYTIC ACTIVITY (ISOFORMS A; B AND C)</scope>
    <scope>SUBCELLULAR LOCATION (ISOFORMS A; B AND C)</scope>
    <scope>DISRUPTION PHENOTYPE</scope>
    <scope>PATHWAY</scope>
</reference>
<reference key="10">
    <citation type="journal article" date="2009" name="Mitochondrion">
        <title>Distinct effects of tafazzin deletion in differentiated and undifferentiated mitochondria.</title>
        <authorList>
            <person name="Acehan D."/>
            <person name="Khuchua Z."/>
            <person name="Houtkooper R.H."/>
            <person name="Malhotra A."/>
            <person name="Kaufman J."/>
            <person name="Vaz F.M."/>
            <person name="Ren M."/>
            <person name="Rockman H.A."/>
            <person name="Stokes D.L."/>
            <person name="Schlame M."/>
        </authorList>
    </citation>
    <scope>FUNCTION</scope>
    <scope>DISRUPTION PHENOTYPE</scope>
</reference>
<reference key="11">
    <citation type="journal article" date="2009" name="Proc. Natl. Acad. Sci. U.S.A.">
        <title>Role of calcium-independent phospholipase A2 in the pathogenesis of Barth syndrome.</title>
        <authorList>
            <person name="Malhotra A."/>
            <person name="Edelman-Novemsky I."/>
            <person name="Xu Y."/>
            <person name="Plesken H."/>
            <person name="Ma J."/>
            <person name="Schlame M."/>
            <person name="Ren M."/>
        </authorList>
    </citation>
    <scope>FUNCTION</scope>
    <scope>DISRUPTION PHENOTYPE</scope>
</reference>
<reference key="12">
    <citation type="journal article" date="2012" name="Nat. Chem. Biol.">
        <title>The physical state of lipid substrates provides transacylation specificity for tafazzin.</title>
        <authorList>
            <person name="Schlame M."/>
            <person name="Acehan D."/>
            <person name="Berno B."/>
            <person name="Xu Y."/>
            <person name="Valvo S."/>
            <person name="Ren M."/>
            <person name="Stokes D.L."/>
            <person name="Epand R.M."/>
        </authorList>
    </citation>
    <scope>FUNCTION</scope>
    <scope>CATALYTIC ACTIVITY (ISOFORM A)</scope>
    <scope>SUBCELLULAR LOCATION</scope>
</reference>
<reference key="13">
    <citation type="journal article" date="2015" name="Mitochondrion">
        <title>Tafazzins from Drosophila and mammalian cells assemble in large protein complexes with a short half-life.</title>
        <authorList>
            <person name="Xu Y."/>
            <person name="Malhotra A."/>
            <person name="Claypool S.M."/>
            <person name="Ren M."/>
            <person name="Schlame M."/>
        </authorList>
    </citation>
    <scope>SUBUNIT</scope>
</reference>
<reference key="14">
    <citation type="journal article" date="2018" name="Physiol. Rep.">
        <title>Drosophila tafazzin mutants have impaired exercise capacity.</title>
        <authorList>
            <person name="Damschroder D."/>
            <person name="Reynolds C."/>
            <person name="Wessells R."/>
        </authorList>
    </citation>
    <scope>DISRUPTION PHENOTYPE</scope>
</reference>
<reference key="15">
    <citation type="journal article" date="2019" name="Proc. Natl. Acad. Sci. U.S.A.">
        <title>Assembly of the complexes of oxidative phosphorylation triggers the remodeling of cardiolipin.</title>
        <authorList>
            <person name="Xu Y."/>
            <person name="Anjaneyulu M."/>
            <person name="Donelian A."/>
            <person name="Yu W."/>
            <person name="Greenberg M.L."/>
            <person name="Ren M."/>
            <person name="Owusu-Ansah E."/>
            <person name="Schlame M."/>
        </authorList>
    </citation>
    <scope>FUNCTION</scope>
    <scope>DISRUPTION PHENOTYPE</scope>
</reference>
<evidence type="ECO:0000250" key="1">
    <source>
        <dbReference type="UniProtKB" id="Q06510"/>
    </source>
</evidence>
<evidence type="ECO:0000250" key="2">
    <source>
        <dbReference type="UniProtKB" id="Q16635"/>
    </source>
</evidence>
<evidence type="ECO:0000250" key="3">
    <source>
        <dbReference type="UniProtKB" id="Q3TFD2"/>
    </source>
</evidence>
<evidence type="ECO:0000255" key="4"/>
<evidence type="ECO:0000256" key="5">
    <source>
        <dbReference type="SAM" id="MobiDB-lite"/>
    </source>
</evidence>
<evidence type="ECO:0000269" key="6">
    <source>
    </source>
</evidence>
<evidence type="ECO:0000269" key="7">
    <source>
    </source>
</evidence>
<evidence type="ECO:0000269" key="8">
    <source>
    </source>
</evidence>
<evidence type="ECO:0000269" key="9">
    <source>
    </source>
</evidence>
<evidence type="ECO:0000269" key="10">
    <source>
    </source>
</evidence>
<evidence type="ECO:0000269" key="11">
    <source>
    </source>
</evidence>
<evidence type="ECO:0000269" key="12">
    <source>
    </source>
</evidence>
<evidence type="ECO:0000269" key="13">
    <source>
    </source>
</evidence>
<evidence type="ECO:0000269" key="14">
    <source>
    </source>
</evidence>
<evidence type="ECO:0000269" key="15">
    <source>
    </source>
</evidence>
<evidence type="ECO:0000303" key="16">
    <source>
    </source>
</evidence>
<evidence type="ECO:0000303" key="17">
    <source>
    </source>
</evidence>
<evidence type="ECO:0000303" key="18">
    <source>
    </source>
</evidence>
<evidence type="ECO:0000303" key="19">
    <source>
    </source>
</evidence>
<evidence type="ECO:0000303" key="20">
    <source>
    </source>
</evidence>
<evidence type="ECO:0000303" key="21">
    <source>
    </source>
</evidence>
<evidence type="ECO:0000305" key="22"/>
<evidence type="ECO:0000305" key="23">
    <source>
    </source>
</evidence>
<evidence type="ECO:0000305" key="24">
    <source>
    </source>
</evidence>
<evidence type="ECO:0000305" key="25">
    <source>
    </source>
</evidence>
<evidence type="ECO:0000305" key="26">
    <source>
    </source>
</evidence>
<evidence type="ECO:0000312" key="27">
    <source>
        <dbReference type="FlyBase" id="FBgn0026619"/>
    </source>
</evidence>
<sequence>MFMVVCSNLRRPGHVGAASAARNINWLISEGYTPPIRAMARPYVQAPEARPVPDERYPGSQQDRKDIATQTVRSSKPKDLRPPSPPTPSQTLNSSSLPPPMSDQDADPSLDVPTGVAMPYNIDWIFPRLRNPSKFWYVVSQFVVSAVGIFSKVVLMFLNKPRVYNRERLIQLITKRPKGIPLVTVSNHYSCFDDPGLWGCLPLGIVCNTYKIRWSMAAHDICFTNKLHSLFFMFGKCIPVVRGIGVYQDAINLCIEKAALGHWIHVFPEGKVNMDKEELRLKWGVGRIIYESPKIPIILPMWHEGMDDLLPNVEPYVIQRGKQVTLNVGQPLDLNDFILDLKKRQVPEPTARKLITDKIQEAFRDLRAETEKLHRERN</sequence>
<name>TAZ_DROME</name>
<gene>
    <name evidence="27" type="primary">Taz</name>
    <name evidence="27" type="ORF">CG8766</name>
</gene>
<feature type="chain" id="PRO_0000220933" description="Tafazzin">
    <location>
        <begin position="1"/>
        <end position="378"/>
    </location>
</feature>
<feature type="topological domain" description="Mitochondrial intermembrane" evidence="2">
    <location>
        <begin position="1"/>
        <end position="137"/>
    </location>
</feature>
<feature type="intramembrane region" evidence="4">
    <location>
        <begin position="138"/>
        <end position="158"/>
    </location>
</feature>
<feature type="topological domain" description="Mitochondrial intermembrane" evidence="2">
    <location>
        <begin position="159"/>
        <end position="378"/>
    </location>
</feature>
<feature type="region of interest" description="Disordered" evidence="5">
    <location>
        <begin position="46"/>
        <end position="112"/>
    </location>
</feature>
<feature type="short sequence motif" description="HXXXXD motif" evidence="3">
    <location>
        <begin position="188"/>
        <end position="193"/>
    </location>
</feature>
<feature type="compositionally biased region" description="Basic and acidic residues" evidence="5">
    <location>
        <begin position="51"/>
        <end position="67"/>
    </location>
</feature>
<feature type="splice variant" id="VSP_004450" description="In isoform B." evidence="22">
    <location>
        <begin position="1"/>
        <end position="100"/>
    </location>
</feature>
<feature type="splice variant" id="VSP_007017" description="In isoform C." evidence="22">
    <original>MFMVVCSNLRRPGHVGAASAARNINWLISEGYTPPIRAMAR</original>
    <variation>M</variation>
    <location>
        <begin position="1"/>
        <end position="41"/>
    </location>
</feature>
<keyword id="KW-0012">Acyltransferase</keyword>
<keyword id="KW-0025">Alternative splicing</keyword>
<keyword id="KW-0256">Endoplasmic reticulum</keyword>
<keyword id="KW-0333">Golgi apparatus</keyword>
<keyword id="KW-0443">Lipid metabolism</keyword>
<keyword id="KW-0472">Membrane</keyword>
<keyword id="KW-0496">Mitochondrion</keyword>
<keyword id="KW-0999">Mitochondrion inner membrane</keyword>
<keyword id="KW-1000">Mitochondrion outer membrane</keyword>
<keyword id="KW-1208">Phospholipid metabolism</keyword>
<keyword id="KW-1185">Reference proteome</keyword>
<keyword id="KW-0808">Transferase</keyword>
<accession>Q9V6G5</accession>
<accession>Q8ML32</accession>
<accession>Q8SZ79</accession>
<accession>Q9U9U8</accession>
<accession>Q9V6G4</accession>
<proteinExistence type="evidence at protein level"/>
<organism>
    <name type="scientific">Drosophila melanogaster</name>
    <name type="common">Fruit fly</name>
    <dbReference type="NCBI Taxonomy" id="7227"/>
    <lineage>
        <taxon>Eukaryota</taxon>
        <taxon>Metazoa</taxon>
        <taxon>Ecdysozoa</taxon>
        <taxon>Arthropoda</taxon>
        <taxon>Hexapoda</taxon>
        <taxon>Insecta</taxon>
        <taxon>Pterygota</taxon>
        <taxon>Neoptera</taxon>
        <taxon>Endopterygota</taxon>
        <taxon>Diptera</taxon>
        <taxon>Brachycera</taxon>
        <taxon>Muscomorpha</taxon>
        <taxon>Ephydroidea</taxon>
        <taxon>Drosophilidae</taxon>
        <taxon>Drosophila</taxon>
        <taxon>Sophophora</taxon>
    </lineage>
</organism>
<dbReference type="EC" id="2.3.1.-" evidence="7 10 12"/>
<dbReference type="EMBL" id="AF148684">
    <property type="protein sequence ID" value="AAD48409.1"/>
    <property type="status" value="ALT_FRAME"/>
    <property type="molecule type" value="mRNA"/>
</dbReference>
<dbReference type="EMBL" id="AE013599">
    <property type="protein sequence ID" value="AAF58461.2"/>
    <property type="molecule type" value="Genomic_DNA"/>
</dbReference>
<dbReference type="EMBL" id="AE013599">
    <property type="protein sequence ID" value="AAF58462.3"/>
    <property type="molecule type" value="Genomic_DNA"/>
</dbReference>
<dbReference type="EMBL" id="AE013599">
    <property type="protein sequence ID" value="AAM68652.2"/>
    <property type="molecule type" value="Genomic_DNA"/>
</dbReference>
<dbReference type="EMBL" id="AY071059">
    <property type="protein sequence ID" value="AAL48681.1"/>
    <property type="molecule type" value="mRNA"/>
</dbReference>
<dbReference type="EMBL" id="AF017783">
    <property type="status" value="NOT_ANNOTATED_CDS"/>
    <property type="molecule type" value="Genomic_DNA"/>
</dbReference>
<dbReference type="RefSeq" id="NP_001188916.1">
    <molecule id="Q9V6G5-2"/>
    <property type="nucleotide sequence ID" value="NM_001201987.2"/>
</dbReference>
<dbReference type="RefSeq" id="NP_477432.3">
    <molecule id="Q9V6G5-1"/>
    <property type="nucleotide sequence ID" value="NM_058084.5"/>
</dbReference>
<dbReference type="RefSeq" id="NP_725226.2">
    <molecule id="Q9V6G5-2"/>
    <property type="nucleotide sequence ID" value="NM_165947.2"/>
</dbReference>
<dbReference type="RefSeq" id="NP_725227.2">
    <molecule id="Q9V6G5-3"/>
    <property type="nucleotide sequence ID" value="NM_165948.2"/>
</dbReference>
<dbReference type="SMR" id="Q9V6G5"/>
<dbReference type="BioGRID" id="62178">
    <property type="interactions" value="4"/>
</dbReference>
<dbReference type="DIP" id="DIP-22278N"/>
<dbReference type="FunCoup" id="Q9V6G5">
    <property type="interactions" value="949"/>
</dbReference>
<dbReference type="IntAct" id="Q9V6G5">
    <property type="interactions" value="2"/>
</dbReference>
<dbReference type="STRING" id="7227.FBpp0086975"/>
<dbReference type="SwissLipids" id="SLP:000000123"/>
<dbReference type="GlyGen" id="Q9V6G5">
    <property type="glycosylation" value="1 site"/>
</dbReference>
<dbReference type="PaxDb" id="7227-FBpp0086975"/>
<dbReference type="DNASU" id="36405"/>
<dbReference type="EnsemblMetazoa" id="FBtr0087862">
    <molecule id="Q9V6G5-1"/>
    <property type="protein sequence ID" value="FBpp0086975"/>
    <property type="gene ID" value="FBgn0026619"/>
</dbReference>
<dbReference type="EnsemblMetazoa" id="FBtr0087863">
    <molecule id="Q9V6G5-2"/>
    <property type="protein sequence ID" value="FBpp0086976"/>
    <property type="gene ID" value="FBgn0026619"/>
</dbReference>
<dbReference type="EnsemblMetazoa" id="FBtr0087864">
    <molecule id="Q9V6G5-3"/>
    <property type="protein sequence ID" value="FBpp0086977"/>
    <property type="gene ID" value="FBgn0026619"/>
</dbReference>
<dbReference type="EnsemblMetazoa" id="FBtr0302455">
    <molecule id="Q9V6G5-2"/>
    <property type="protein sequence ID" value="FBpp0291643"/>
    <property type="gene ID" value="FBgn0026619"/>
</dbReference>
<dbReference type="GeneID" id="36405"/>
<dbReference type="KEGG" id="dme:Dmel_CG8766"/>
<dbReference type="UCSC" id="CG8766-RA">
    <molecule id="Q9V6G5-1"/>
    <property type="organism name" value="d. melanogaster"/>
</dbReference>
<dbReference type="AGR" id="FB:FBgn0026619"/>
<dbReference type="CTD" id="36405"/>
<dbReference type="FlyBase" id="FBgn0026619">
    <property type="gene designation" value="Taz"/>
</dbReference>
<dbReference type="VEuPathDB" id="VectorBase:FBgn0026619"/>
<dbReference type="eggNOG" id="KOG2847">
    <property type="taxonomic scope" value="Eukaryota"/>
</dbReference>
<dbReference type="GeneTree" id="ENSGT00390000018621"/>
<dbReference type="InParanoid" id="Q9V6G5"/>
<dbReference type="OMA" id="TTGWFNT"/>
<dbReference type="OrthoDB" id="193467at2759"/>
<dbReference type="PhylomeDB" id="Q9V6G5"/>
<dbReference type="Reactome" id="R-DME-1268020">
    <property type="pathway name" value="Mitochondrial protein import"/>
</dbReference>
<dbReference type="Reactome" id="R-DME-1482798">
    <property type="pathway name" value="Acyl chain remodeling of CL"/>
</dbReference>
<dbReference type="BioGRID-ORCS" id="36405">
    <property type="hits" value="0 hits in 1 CRISPR screen"/>
</dbReference>
<dbReference type="GenomeRNAi" id="36405"/>
<dbReference type="PRO" id="PR:Q9V6G5"/>
<dbReference type="Proteomes" id="UP000000803">
    <property type="component" value="Chromosome 2R"/>
</dbReference>
<dbReference type="Bgee" id="FBgn0026619">
    <property type="expression patterns" value="Expressed in capitellum (Drosophila) and 133 other cell types or tissues"/>
</dbReference>
<dbReference type="ExpressionAtlas" id="Q9V6G5">
    <property type="expression patterns" value="baseline and differential"/>
</dbReference>
<dbReference type="GO" id="GO:0005783">
    <property type="term" value="C:endoplasmic reticulum"/>
    <property type="evidence" value="ECO:0000314"/>
    <property type="project" value="UniProtKB"/>
</dbReference>
<dbReference type="GO" id="GO:0005789">
    <property type="term" value="C:endoplasmic reticulum membrane"/>
    <property type="evidence" value="ECO:0007669"/>
    <property type="project" value="UniProtKB-SubCell"/>
</dbReference>
<dbReference type="GO" id="GO:0005794">
    <property type="term" value="C:Golgi apparatus"/>
    <property type="evidence" value="ECO:0000314"/>
    <property type="project" value="UniProtKB"/>
</dbReference>
<dbReference type="GO" id="GO:0000139">
    <property type="term" value="C:Golgi membrane"/>
    <property type="evidence" value="ECO:0007669"/>
    <property type="project" value="UniProtKB-SubCell"/>
</dbReference>
<dbReference type="GO" id="GO:0005743">
    <property type="term" value="C:mitochondrial inner membrane"/>
    <property type="evidence" value="ECO:0007669"/>
    <property type="project" value="UniProtKB-SubCell"/>
</dbReference>
<dbReference type="GO" id="GO:0005758">
    <property type="term" value="C:mitochondrial intermembrane space"/>
    <property type="evidence" value="ECO:0000304"/>
    <property type="project" value="FlyBase"/>
</dbReference>
<dbReference type="GO" id="GO:0031966">
    <property type="term" value="C:mitochondrial membrane"/>
    <property type="evidence" value="ECO:0000318"/>
    <property type="project" value="GO_Central"/>
</dbReference>
<dbReference type="GO" id="GO:0005741">
    <property type="term" value="C:mitochondrial outer membrane"/>
    <property type="evidence" value="ECO:0007669"/>
    <property type="project" value="UniProtKB-SubCell"/>
</dbReference>
<dbReference type="GO" id="GO:0005739">
    <property type="term" value="C:mitochondrion"/>
    <property type="evidence" value="ECO:0000314"/>
    <property type="project" value="UniProtKB"/>
</dbReference>
<dbReference type="GO" id="GO:0047184">
    <property type="term" value="F:1-acylglycerophosphocholine O-acyltransferase activity"/>
    <property type="evidence" value="ECO:0000318"/>
    <property type="project" value="GO_Central"/>
</dbReference>
<dbReference type="GO" id="GO:0016746">
    <property type="term" value="F:acyltransferase activity"/>
    <property type="evidence" value="ECO:0000314"/>
    <property type="project" value="FlyBase"/>
</dbReference>
<dbReference type="GO" id="GO:0008374">
    <property type="term" value="F:O-acyltransferase activity"/>
    <property type="evidence" value="ECO:0000314"/>
    <property type="project" value="FlyBase"/>
</dbReference>
<dbReference type="GO" id="GO:0032577">
    <property type="term" value="F:phosphatidylcholine:cardiolipin O-linoleoyltransferase activity"/>
    <property type="evidence" value="ECO:0000314"/>
    <property type="project" value="FlyBase"/>
</dbReference>
<dbReference type="GO" id="GO:0035965">
    <property type="term" value="P:cardiolipin acyl-chain remodeling"/>
    <property type="evidence" value="ECO:0000314"/>
    <property type="project" value="UniProtKB"/>
</dbReference>
<dbReference type="GO" id="GO:0032049">
    <property type="term" value="P:cardiolipin biosynthetic process"/>
    <property type="evidence" value="ECO:0000315"/>
    <property type="project" value="UniProtKB"/>
</dbReference>
<dbReference type="GO" id="GO:0032048">
    <property type="term" value="P:cardiolipin metabolic process"/>
    <property type="evidence" value="ECO:0000314"/>
    <property type="project" value="FlyBase"/>
</dbReference>
<dbReference type="GO" id="GO:0007007">
    <property type="term" value="P:inner mitochondrial membrane organization"/>
    <property type="evidence" value="ECO:0000318"/>
    <property type="project" value="GO_Central"/>
</dbReference>
<dbReference type="GO" id="GO:0007006">
    <property type="term" value="P:mitochondrial membrane organization"/>
    <property type="evidence" value="ECO:0000314"/>
    <property type="project" value="FlyBase"/>
</dbReference>
<dbReference type="GO" id="GO:0006644">
    <property type="term" value="P:phospholipid metabolic process"/>
    <property type="evidence" value="ECO:0000314"/>
    <property type="project" value="FlyBase"/>
</dbReference>
<dbReference type="GO" id="GO:0007291">
    <property type="term" value="P:sperm individualization"/>
    <property type="evidence" value="ECO:0000315"/>
    <property type="project" value="UniProtKB"/>
</dbReference>
<dbReference type="CDD" id="cd07989">
    <property type="entry name" value="LPLAT_AGPAT-like"/>
    <property type="match status" value="1"/>
</dbReference>
<dbReference type="InterPro" id="IPR002123">
    <property type="entry name" value="Plipid/glycerol_acylTrfase"/>
</dbReference>
<dbReference type="InterPro" id="IPR000872">
    <property type="entry name" value="Tafazzin"/>
</dbReference>
<dbReference type="PANTHER" id="PTHR12497:SF0">
    <property type="entry name" value="TAFAZZIN"/>
    <property type="match status" value="1"/>
</dbReference>
<dbReference type="PANTHER" id="PTHR12497">
    <property type="entry name" value="TAZ PROTEIN TAFAZZIN"/>
    <property type="match status" value="1"/>
</dbReference>
<dbReference type="Pfam" id="PF01553">
    <property type="entry name" value="Acyltransferase"/>
    <property type="match status" value="1"/>
</dbReference>
<dbReference type="PRINTS" id="PR00979">
    <property type="entry name" value="TAFAZZIN"/>
</dbReference>
<dbReference type="SMART" id="SM00563">
    <property type="entry name" value="PlsC"/>
    <property type="match status" value="1"/>
</dbReference>
<dbReference type="SUPFAM" id="SSF69593">
    <property type="entry name" value="Glycerol-3-phosphate (1)-acyltransferase"/>
    <property type="match status" value="1"/>
</dbReference>
<comment type="function">
    <text evidence="1 2 6 7 8 9 10 11 12 15">Acyltransferase required to remodel newly synthesized phospholipid cardiolipin (1',3'-bis-[1,2-diacyl-sn-glycero-3-phospho]-glycerol or CL), a key component of the mitochondrial inner membrane, with tissue specific acyl chains necessary for adequate mitochondrial function. Its role in cellular physiology is to improve mitochondrial performance (By similarity). CL is critical for the coassembly of lipids and proteins in mitochondrial membranes (PubMed:16855048, PubMed:17082194, PubMed:19114128, PubMed:19416660, PubMed:19700766). For instance, remodeling of the acyl groups of CL in the mitochondrial inner membrane affects the assembly and stability of respiratory chain complex IV and its supercomplex forms (By similarity). Catalyzes the transacylation between phospholipids and lysophospholipids, with the highest rate being between phosphatidylcholine (1,2-diacyl-sn-glycero-3-phosphocholine or PC) and CL (PubMed:17082194, PubMed:19416660, PubMed:22941046). Catalyzes both 1-acyl-sn-glycero-3-phosphocholine (lysophosphatidylcholine or LPC) reacylation and PC-CL transacylation, that means, it exchanges acyl groups between CL and PC by a combination of forward and reverse transacylations. Also catalyzes transacylations between other phospholipids such as phosphatidylethanolamine (1,2-diacyl-sn-glycero-3-phosphoethanolamine or PE) and CL, between PC and PE, and between PC and phosphatidate (1,2-diacyl-sn-glycero-3-phosphate or PA), although at lower rate (PubMed:17082194). Not regiospecific, it transfers acyl groups into any of the sn-1 and sn-2 positions of the monolysocardiolipin (MLCL), which is an important prerequisite for uniformity and symmetry in CL acyl distribution. Cannot transacylate dilysocardiolipin (DLCL), thus, the role of MLCL is limited to that of an acyl acceptor (PubMed:19416660). CoA-independent, it can reshuffle molecular species within a single phospholipid class (PubMed:17082194, PubMed:22941046). Redistributes fatty acids between MLCL, CL, and other lipids, which prolongs the half-life of CL (PubMed:31110016). Its action is completely reversible, which allows for cyclic changes, such as fission and fusion or bending and flattening of the membrane. Hence, by contributing to the flexibility of the lipid composition, it plays an important role in the dynamics of mitochondria membranes (PubMed:22941046). Essential for the final stage of spermatogenesis, spermatid individualization (PubMed:19164547). Required for the initiation of mitophagy (By similarity).</text>
</comment>
<comment type="catalytic activity">
    <molecule>Isoform A</molecule>
    <reaction evidence="10 11 12 23">
        <text>1'-[1,2-diacyl-sn-glycero-3-phospho],3'-[1-acyl-sn-glycero-3-phospho]-glycerol + a 1,2-diacyl-sn-glycero-3-phosphocholine = a cardiolipin + a 1-acyl-sn-glycero-3-phosphocholine</text>
        <dbReference type="Rhea" id="RHEA:33731"/>
        <dbReference type="ChEBI" id="CHEBI:57643"/>
        <dbReference type="ChEBI" id="CHEBI:58168"/>
        <dbReference type="ChEBI" id="CHEBI:62237"/>
        <dbReference type="ChEBI" id="CHEBI:64743"/>
    </reaction>
    <physiologicalReaction direction="left-to-right" evidence="10 11 12 23">
        <dbReference type="Rhea" id="RHEA:33732"/>
    </physiologicalReaction>
    <physiologicalReaction direction="right-to-left" evidence="10 11 12 23">
        <dbReference type="Rhea" id="RHEA:33733"/>
    </physiologicalReaction>
</comment>
<comment type="catalytic activity">
    <molecule>Isoform B</molecule>
    <reaction evidence="11">
        <text>1'-[1,2-diacyl-sn-glycero-3-phospho],3'-[1-acyl-sn-glycero-3-phospho]-glycerol + a 1,2-diacyl-sn-glycero-3-phosphocholine = a cardiolipin + a 1-acyl-sn-glycero-3-phosphocholine</text>
        <dbReference type="Rhea" id="RHEA:33731"/>
        <dbReference type="ChEBI" id="CHEBI:57643"/>
        <dbReference type="ChEBI" id="CHEBI:58168"/>
        <dbReference type="ChEBI" id="CHEBI:62237"/>
        <dbReference type="ChEBI" id="CHEBI:64743"/>
    </reaction>
    <physiologicalReaction direction="left-to-right" evidence="11">
        <dbReference type="Rhea" id="RHEA:33732"/>
    </physiologicalReaction>
    <physiologicalReaction direction="right-to-left" evidence="11">
        <dbReference type="Rhea" id="RHEA:33733"/>
    </physiologicalReaction>
</comment>
<comment type="catalytic activity">
    <molecule>Isoform C</molecule>
    <reaction evidence="11">
        <text>1'-[1,2-diacyl-sn-glycero-3-phospho],3'-[1-acyl-sn-glycero-3-phospho]-glycerol + a 1,2-diacyl-sn-glycero-3-phosphocholine = a cardiolipin + a 1-acyl-sn-glycero-3-phosphocholine</text>
        <dbReference type="Rhea" id="RHEA:33731"/>
        <dbReference type="ChEBI" id="CHEBI:57643"/>
        <dbReference type="ChEBI" id="CHEBI:58168"/>
        <dbReference type="ChEBI" id="CHEBI:62237"/>
        <dbReference type="ChEBI" id="CHEBI:64743"/>
    </reaction>
    <physiologicalReaction direction="left-to-right" evidence="11">
        <dbReference type="Rhea" id="RHEA:33732"/>
    </physiologicalReaction>
    <physiologicalReaction direction="right-to-left" evidence="11">
        <dbReference type="Rhea" id="RHEA:33733"/>
    </physiologicalReaction>
</comment>
<comment type="catalytic activity">
    <molecule>Isoform A</molecule>
    <reaction evidence="10 23">
        <text>1'-[1,2-di-(9Z,12Z-octadecadienoyl)-sn-glycero-3-phospho]-3'-[1-(9Z,12Z-octadecadienoyl)-sn-glycero-3-phospho]-glycerol + 1-hexadecanoyl-2-(9Z,12Z-octadecadienoyl)-sn-glycero-3-phosphocholine = 1',3'-bis-[1,2-di-(9Z,12Z-octadecadienoyl)-sn-glycero-3-phospho]-glycerol + 1-hexadecanoyl-sn-glycero-3-phosphocholine</text>
        <dbReference type="Rhea" id="RHEA:43796"/>
        <dbReference type="ChEBI" id="CHEBI:72998"/>
        <dbReference type="ChEBI" id="CHEBI:73002"/>
        <dbReference type="ChEBI" id="CHEBI:83580"/>
        <dbReference type="ChEBI" id="CHEBI:83581"/>
    </reaction>
    <physiologicalReaction direction="left-to-right" evidence="10 23">
        <dbReference type="Rhea" id="RHEA:43797"/>
    </physiologicalReaction>
    <physiologicalReaction direction="right-to-left" evidence="10 23">
        <dbReference type="Rhea" id="RHEA:43798"/>
    </physiologicalReaction>
</comment>
<comment type="catalytic activity">
    <molecule>Isoform A</molecule>
    <reaction evidence="10 23">
        <text>1'-[1,2-di-(9Z,12Z-octadecadienoyl)-sn-glycero-3-phospho]-3'-[2-(9Z,12Z-octadecadienoyl)-sn-glycero-3-phospho]-glycerol + 1-hexadecanoyl-2-(9Z,12Z-octadecadienoyl)-sn-glycero-3-phosphocholine = 1',3'-bis-[1,2-di-(9Z,12Z-octadecadienoyl)-sn-glycero-3-phospho]-glycerol + 1-hexadecanoyl-sn-glycero-3-phosphocholine</text>
        <dbReference type="Rhea" id="RHEA:43800"/>
        <dbReference type="ChEBI" id="CHEBI:72998"/>
        <dbReference type="ChEBI" id="CHEBI:73002"/>
        <dbReference type="ChEBI" id="CHEBI:83581"/>
        <dbReference type="ChEBI" id="CHEBI:83714"/>
    </reaction>
    <physiologicalReaction direction="left-to-right" evidence="10 23">
        <dbReference type="Rhea" id="RHEA:43801"/>
    </physiologicalReaction>
    <physiologicalReaction direction="right-to-left" evidence="10 23">
        <dbReference type="Rhea" id="RHEA:43802"/>
    </physiologicalReaction>
</comment>
<comment type="catalytic activity">
    <molecule>Isoform A</molecule>
    <reaction evidence="12">
        <text>1,2-di-(9Z,12Z-octadecadienoyl)-sn-glycero-3-phosphocholine + 1'-[1,2-di-(9Z,12Z-octadecadienoyl)-sn-glycero-3-phospho]-3'-[1-(9Z,12Z-octadecadienoyl)-sn-glycero-3-phospho]-glycerol = 1-(9Z,12Z)-octadecadienoyl-sn-glycero-3-phosphocholine + 1',3'-bis-[1,2-di-(9Z,12Z-octadecadienoyl)-sn-glycero-3-phospho]-glycerol</text>
        <dbReference type="Rhea" id="RHEA:67456"/>
        <dbReference type="ChEBI" id="CHEBI:28733"/>
        <dbReference type="ChEBI" id="CHEBI:42027"/>
        <dbReference type="ChEBI" id="CHEBI:83580"/>
        <dbReference type="ChEBI" id="CHEBI:83581"/>
    </reaction>
    <physiologicalReaction direction="left-to-right" evidence="12">
        <dbReference type="Rhea" id="RHEA:67457"/>
    </physiologicalReaction>
    <physiologicalReaction direction="right-to-left" evidence="26">
        <dbReference type="Rhea" id="RHEA:67458"/>
    </physiologicalReaction>
</comment>
<comment type="catalytic activity">
    <molecule>Isoform A</molecule>
    <reaction evidence="12">
        <text>1-tetradecanoyl-sn-glycero-3-phosphocholine + 1',3'-bis-[1,2-di-(9Z,12Z-octadecadienoyl)-sn-glycero-3-phospho]-glycerol = 1-tetradecanoyl-2-(9Z,12Z-octadecadienoyl)-sn-glycero-3-phosphocholine + 1'-[1,2-di-(9Z,12Z-octadecadienoyl)-sn-glycero-3-phospho]-3'-[1-(9Z,12Z-octadecadienoyl)-sn-glycero-3-phospho]-glycerol</text>
        <dbReference type="Rhea" id="RHEA:67488"/>
        <dbReference type="ChEBI" id="CHEBI:64489"/>
        <dbReference type="ChEBI" id="CHEBI:83580"/>
        <dbReference type="ChEBI" id="CHEBI:83581"/>
        <dbReference type="ChEBI" id="CHEBI:86094"/>
    </reaction>
    <physiologicalReaction direction="left-to-right" evidence="12">
        <dbReference type="Rhea" id="RHEA:67489"/>
    </physiologicalReaction>
    <physiologicalReaction direction="right-to-left" evidence="26">
        <dbReference type="Rhea" id="RHEA:67490"/>
    </physiologicalReaction>
</comment>
<comment type="catalytic activity">
    <molecule>Isoform A</molecule>
    <reaction evidence="12">
        <text>1',3'-bis[1,2-di-(9Z-octadecenoyl)-sn-glycero-3-phospho]-glycerol + 1-nonadecanoyl-sn-glycero-3-phosphocholine = 1-nonadecanoyl-2-(9Z-octadecenoyl)-sn-glycero-3-phosphocholine + 1'-[1,2-di-(9Z-octadecenoyl)-sn-glycero-3-phospho]-3'-[1-(9Z-octadecenoyl)-sn-glycero-3-phospho]-glycerol</text>
        <dbReference type="Rhea" id="RHEA:67520"/>
        <dbReference type="ChEBI" id="CHEBI:77253"/>
        <dbReference type="ChEBI" id="CHEBI:77259"/>
        <dbReference type="ChEBI" id="CHEBI:131989"/>
        <dbReference type="ChEBI" id="CHEBI:172373"/>
    </reaction>
    <physiologicalReaction direction="left-to-right" evidence="12">
        <dbReference type="Rhea" id="RHEA:67521"/>
    </physiologicalReaction>
    <physiologicalReaction direction="right-to-left" evidence="26">
        <dbReference type="Rhea" id="RHEA:67522"/>
    </physiologicalReaction>
</comment>
<comment type="catalytic activity">
    <molecule>Isoform A</molecule>
    <reaction evidence="10 12">
        <text>a 1,2-diacyl-sn-glycero-3-phospho-(1'-sn-glycerol) + a 1-acyl-sn-glycero-3-phosphocholine = 1-acyl-sn-glycero-3-phospho-(1'-sn-glycerol) + a 1,2-diacyl-sn-glycero-3-phosphocholine</text>
        <dbReference type="Rhea" id="RHEA:67676"/>
        <dbReference type="ChEBI" id="CHEBI:57643"/>
        <dbReference type="ChEBI" id="CHEBI:58168"/>
        <dbReference type="ChEBI" id="CHEBI:64716"/>
        <dbReference type="ChEBI" id="CHEBI:64840"/>
    </reaction>
    <physiologicalReaction direction="left-to-right" evidence="10 12">
        <dbReference type="Rhea" id="RHEA:67677"/>
    </physiologicalReaction>
    <physiologicalReaction direction="right-to-left" evidence="24 26">
        <dbReference type="Rhea" id="RHEA:67678"/>
    </physiologicalReaction>
</comment>
<comment type="catalytic activity">
    <molecule>Isoform A</molecule>
    <reaction evidence="10">
        <text>1-hexadecanoyl-2-(9Z,12Z-octadecadienoyl)-sn-glycero-3-phospho-(1'-sn-glycerol) + 1-hexadecanoyl-sn-glycero-3-phosphocholine = 1-hexadecanoyl-sn-glycero-3-phospho-(1'-sn-glycerol) + 1-hexadecanoyl-2-(9Z,12Z-octadecadienoyl)-sn-glycero-3-phosphocholine</text>
        <dbReference type="Rhea" id="RHEA:43828"/>
        <dbReference type="ChEBI" id="CHEBI:72840"/>
        <dbReference type="ChEBI" id="CHEBI:72998"/>
        <dbReference type="ChEBI" id="CHEBI:73002"/>
        <dbReference type="ChEBI" id="CHEBI:75158"/>
    </reaction>
    <physiologicalReaction direction="left-to-right" evidence="10">
        <dbReference type="Rhea" id="RHEA:43829"/>
    </physiologicalReaction>
    <physiologicalReaction direction="right-to-left" evidence="24">
        <dbReference type="Rhea" id="RHEA:43830"/>
    </physiologicalReaction>
</comment>
<comment type="catalytic activity">
    <molecule>Isoform A</molecule>
    <reaction evidence="12">
        <text>1,2-di-(9Z-octadecenoyl)-sn-glycero-3-phospho-(1'-sn-glycerol) + 1-nonadecanoyl-sn-glycero-3-phosphocholine = 1-nonadecanoyl-2-(9Z-octadecenoyl)-sn-glycero-3-phosphocholine + 1-(9Z-octadecenoyl)-sn-glycero-3-phospho-(1'-sn-glycerol)</text>
        <dbReference type="Rhea" id="RHEA:67516"/>
        <dbReference type="ChEBI" id="CHEBI:72828"/>
        <dbReference type="ChEBI" id="CHEBI:75163"/>
        <dbReference type="ChEBI" id="CHEBI:131989"/>
        <dbReference type="ChEBI" id="CHEBI:172373"/>
    </reaction>
    <physiologicalReaction direction="left-to-right" evidence="12">
        <dbReference type="Rhea" id="RHEA:67517"/>
    </physiologicalReaction>
    <physiologicalReaction direction="right-to-left" evidence="26">
        <dbReference type="Rhea" id="RHEA:67518"/>
    </physiologicalReaction>
</comment>
<comment type="catalytic activity">
    <molecule>Isoform A</molecule>
    <reaction evidence="7 10">
        <text>a 1,2-diacyl-sn-glycero-3-phosphate + a 1-acyl-sn-glycero-3-phosphocholine = a 1-acyl-sn-glycero-3-phosphate + a 1,2-diacyl-sn-glycero-3-phosphocholine</text>
        <dbReference type="Rhea" id="RHEA:67672"/>
        <dbReference type="ChEBI" id="CHEBI:57643"/>
        <dbReference type="ChEBI" id="CHEBI:57970"/>
        <dbReference type="ChEBI" id="CHEBI:58168"/>
        <dbReference type="ChEBI" id="CHEBI:58608"/>
    </reaction>
    <physiologicalReaction direction="left-to-right" evidence="10">
        <dbReference type="Rhea" id="RHEA:67673"/>
    </physiologicalReaction>
    <physiologicalReaction direction="right-to-left" evidence="7">
        <dbReference type="Rhea" id="RHEA:67674"/>
    </physiologicalReaction>
</comment>
<comment type="catalytic activity">
    <molecule>Isoform A</molecule>
    <reaction evidence="10">
        <text>1-hexadecanoyl-2-(9Z,12Z-octadecadienoyl)-sn-glycero-3-phosphate + 1-hexadecanoyl-sn-glycero-3-phosphocholine = 1-hexadecanoyl-2-(9Z,12Z-octadecadienoyl)-sn-glycero-3-phosphocholine + 1-hexadecanoyl-sn-glycero-3-phosphate</text>
        <dbReference type="Rhea" id="RHEA:43824"/>
        <dbReference type="ChEBI" id="CHEBI:57518"/>
        <dbReference type="ChEBI" id="CHEBI:72860"/>
        <dbReference type="ChEBI" id="CHEBI:72998"/>
        <dbReference type="ChEBI" id="CHEBI:73002"/>
    </reaction>
    <physiologicalReaction direction="left-to-right" evidence="10">
        <dbReference type="Rhea" id="RHEA:43825"/>
    </physiologicalReaction>
    <physiologicalReaction direction="right-to-left" evidence="24">
        <dbReference type="Rhea" id="RHEA:43826"/>
    </physiologicalReaction>
</comment>
<comment type="catalytic activity">
    <molecule>Isoform A</molecule>
    <reaction evidence="7">
        <text>1-hexadecanoyl-2-(9Z,12Z-octadecadienoyl)-sn-glycero-3-phosphocholine + 1-(9Z-octadecenoyl)-sn-glycero-3-phosphate = 1-(9Z)-octadecenoyl-2-(9Z,12Z)-octadecadienoyl-sn-glycero-3-phosphate + 1-hexadecanoyl-sn-glycero-3-phosphocholine</text>
        <dbReference type="Rhea" id="RHEA:65036"/>
        <dbReference type="ChEBI" id="CHEBI:72998"/>
        <dbReference type="ChEBI" id="CHEBI:73002"/>
        <dbReference type="ChEBI" id="CHEBI:74544"/>
        <dbReference type="ChEBI" id="CHEBI:74563"/>
    </reaction>
    <physiologicalReaction direction="left-to-right" evidence="7">
        <dbReference type="Rhea" id="RHEA:65037"/>
    </physiologicalReaction>
    <physiologicalReaction direction="right-to-left" evidence="23">
        <dbReference type="Rhea" id="RHEA:65038"/>
    </physiologicalReaction>
</comment>
<comment type="catalytic activity">
    <molecule>Isoform A</molecule>
    <reaction evidence="7 10 12">
        <text>a 1-acyl-sn-glycero-3-phosphocholine + a 1,2-diacyl-sn-glycero-3-phosphoethanolamine = a 1-acyl-sn-glycero-3-phosphoethanolamine + a 1,2-diacyl-sn-glycero-3-phosphocholine</text>
        <dbReference type="Rhea" id="RHEA:67668"/>
        <dbReference type="ChEBI" id="CHEBI:57643"/>
        <dbReference type="ChEBI" id="CHEBI:58168"/>
        <dbReference type="ChEBI" id="CHEBI:64381"/>
        <dbReference type="ChEBI" id="CHEBI:64612"/>
    </reaction>
    <physiologicalReaction direction="left-to-right" evidence="7 10 12">
        <dbReference type="Rhea" id="RHEA:67669"/>
    </physiologicalReaction>
    <physiologicalReaction direction="right-to-left" evidence="23 24 26">
        <dbReference type="Rhea" id="RHEA:67670"/>
    </physiologicalReaction>
</comment>
<comment type="catalytic activity">
    <molecule>Isoform A</molecule>
    <reaction evidence="7 10">
        <text>1-hexadecanoyl-2-(9Z,12Z-octadecadienoyl)-sn-glycero-3-phosphoethanolamine + 1-hexadecanoyl-sn-glycero-3-phosphocholine = 1-hexadecanoyl-2-(9Z,12Z-octadecadienoyl)-sn-glycero-3-phosphocholine + 1-hexadecanoyl-sn-glycero-3-phosphoethanolamine</text>
        <dbReference type="Rhea" id="RHEA:43820"/>
        <dbReference type="ChEBI" id="CHEBI:72998"/>
        <dbReference type="ChEBI" id="CHEBI:73002"/>
        <dbReference type="ChEBI" id="CHEBI:73004"/>
        <dbReference type="ChEBI" id="CHEBI:73008"/>
    </reaction>
    <physiologicalReaction direction="left-to-right" evidence="7 10">
        <dbReference type="Rhea" id="RHEA:43821"/>
    </physiologicalReaction>
    <physiologicalReaction direction="right-to-left" evidence="7 24">
        <dbReference type="Rhea" id="RHEA:43822"/>
    </physiologicalReaction>
</comment>
<comment type="catalytic activity">
    <molecule>Isoform A</molecule>
    <reaction evidence="12">
        <text>1,2-di-(9Z,12Z-octadecadienoyl)-sn-glycero-3-phosphoethanolamine + 1-tetradecanoyl-sn-glycero-3-phosphocholine = 1-(9Z,12Z-octadecadienoyl)-sn-glycero-3-phosphoethanolamine + 1-tetradecanoyl-2-(9Z,12Z-octadecadienoyl)-sn-glycero-3-phosphocholine</text>
        <dbReference type="Rhea" id="RHEA:67584"/>
        <dbReference type="ChEBI" id="CHEBI:64489"/>
        <dbReference type="ChEBI" id="CHEBI:86094"/>
        <dbReference type="ChEBI" id="CHEBI:133732"/>
        <dbReference type="ChEBI" id="CHEBI:172403"/>
    </reaction>
    <physiologicalReaction direction="left-to-right" evidence="12">
        <dbReference type="Rhea" id="RHEA:67585"/>
    </physiologicalReaction>
    <physiologicalReaction direction="right-to-left" evidence="26">
        <dbReference type="Rhea" id="RHEA:67586"/>
    </physiologicalReaction>
</comment>
<comment type="catalytic activity">
    <molecule>Isoform A</molecule>
    <reaction evidence="7">
        <text>1'-[1,2-diacyl-sn-glycero-3-phospho],3'-[1-acyl-sn-glycero-3-phospho]-glycerol + a 1,2-diacyl-sn-glycero-3-phosphoethanolamine = a cardiolipin + a 1-acyl-sn-glycero-3-phosphoethanolamine</text>
        <dbReference type="Rhea" id="RHEA:35843"/>
        <dbReference type="ChEBI" id="CHEBI:62237"/>
        <dbReference type="ChEBI" id="CHEBI:64381"/>
        <dbReference type="ChEBI" id="CHEBI:64612"/>
        <dbReference type="ChEBI" id="CHEBI:64743"/>
    </reaction>
    <physiologicalReaction direction="left-to-right" evidence="7">
        <dbReference type="Rhea" id="RHEA:35844"/>
    </physiologicalReaction>
    <physiologicalReaction direction="right-to-left" evidence="23">
        <dbReference type="Rhea" id="RHEA:35845"/>
    </physiologicalReaction>
</comment>
<comment type="catalytic activity">
    <molecule>Isoform A</molecule>
    <reaction evidence="7">
        <text>1-hexadecanoyl-2-(9Z,12Z-octadecadienoyl)-sn-glycero-3-phosphoethanolamine + 1'-[1,2-di-(9Z,12Z-octadecadienoyl)-sn-glycero-3-phospho]-3'-[1-(9Z,12Z-octadecadienoyl)-sn-glycero-3-phospho]-glycerol = 1',3'-bis-[1,2-di-(9Z,12Z-octadecadienoyl)-sn-glycero-3-phospho]-glycerol + 1-hexadecanoyl-sn-glycero-3-phosphoethanolamine</text>
        <dbReference type="Rhea" id="RHEA:65040"/>
        <dbReference type="ChEBI" id="CHEBI:73004"/>
        <dbReference type="ChEBI" id="CHEBI:73008"/>
        <dbReference type="ChEBI" id="CHEBI:83580"/>
        <dbReference type="ChEBI" id="CHEBI:83581"/>
    </reaction>
    <physiologicalReaction direction="left-to-right" evidence="7">
        <dbReference type="Rhea" id="RHEA:65041"/>
    </physiologicalReaction>
    <physiologicalReaction direction="right-to-left" evidence="23">
        <dbReference type="Rhea" id="RHEA:65042"/>
    </physiologicalReaction>
</comment>
<comment type="catalytic activity">
    <molecule>Isoform A</molecule>
    <reaction evidence="10">
        <text>1'-[1-(9Z,12Z-octadecadienoyl)-2-(9Z-octadecenoyl)-sn-glycero-3-phospho]-3'-[1-(9Z,12Z-octadecadienoyl)-sn-glycero-3-phospho]-glycerol + 1',3'-bis-[1,2-di-(9Z,12Z-octadecadienoyl)-sn-glycero-3-phospho]-glycerol = 1'-[1,2-di-(9Z,12Z-octadecadienoyl)-sn-glycero-3-phospho]-3'-[1-(9Z,12Z-octadecadienoyl)-2-(9Z-octadecenoyl)-sn-glycero-3-phospho]-glycerol + 1'-[1,2-di-(9Z,12Z-octadecadienoyl)-sn-glycero-3-phospho]-3'-[1-(9Z,12Z-octadecadienoyl)-sn-glycero-3-phospho]-glycerol</text>
        <dbReference type="Rhea" id="RHEA:43804"/>
        <dbReference type="ChEBI" id="CHEBI:83580"/>
        <dbReference type="ChEBI" id="CHEBI:83581"/>
        <dbReference type="ChEBI" id="CHEBI:83582"/>
        <dbReference type="ChEBI" id="CHEBI:83715"/>
    </reaction>
    <physiologicalReaction direction="left-to-right" evidence="10">
        <dbReference type="Rhea" id="RHEA:43805"/>
    </physiologicalReaction>
    <physiologicalReaction direction="right-to-left" evidence="24">
        <dbReference type="Rhea" id="RHEA:43806"/>
    </physiologicalReaction>
</comment>
<comment type="catalytic activity">
    <molecule>Isoform A</molecule>
    <reaction evidence="10">
        <text>1,2-di-(9Z-hexadecenoyl)-sn-glycero-3-phosphocholine + 1-hexadecanoyl-sn-glycero-3-phosphocholine = 1-hexadecanoyl-2-(9Z-hexadecenoyl)-sn-glycero-3-phosphocholine + 1-(9Z-hexadecenoyl)-sn-glycero-3-phosphocholine</text>
        <dbReference type="Rhea" id="RHEA:43808"/>
        <dbReference type="ChEBI" id="CHEBI:72998"/>
        <dbReference type="ChEBI" id="CHEBI:73851"/>
        <dbReference type="ChEBI" id="CHEBI:74000"/>
        <dbReference type="ChEBI" id="CHEBI:83717"/>
    </reaction>
    <physiologicalReaction direction="left-to-right" evidence="10">
        <dbReference type="Rhea" id="RHEA:43809"/>
    </physiologicalReaction>
    <physiologicalReaction direction="right-to-left" evidence="24">
        <dbReference type="Rhea" id="RHEA:43810"/>
    </physiologicalReaction>
</comment>
<comment type="catalytic activity">
    <molecule>Isoform A</molecule>
    <reaction evidence="10">
        <text>1,2-dioctadecanoyl-sn-glycero-3-phosphocholine + 1-hexadecanoyl-sn-glycero-3-phosphocholine = 1-hexadecanoyl-2-octadecanoyl-sn-glycero-3-phosphocholine + 1-octadecanoyl-sn-glycero-3-phosphocholine</text>
        <dbReference type="Rhea" id="RHEA:43812"/>
        <dbReference type="ChEBI" id="CHEBI:72998"/>
        <dbReference type="ChEBI" id="CHEBI:73000"/>
        <dbReference type="ChEBI" id="CHEBI:73858"/>
        <dbReference type="ChEBI" id="CHEBI:83718"/>
    </reaction>
    <physiologicalReaction direction="left-to-right" evidence="10">
        <dbReference type="Rhea" id="RHEA:43813"/>
    </physiologicalReaction>
    <physiologicalReaction direction="right-to-left" evidence="24">
        <dbReference type="Rhea" id="RHEA:43814"/>
    </physiologicalReaction>
</comment>
<comment type="catalytic activity">
    <molecule>Isoform A</molecule>
    <reaction evidence="10">
        <text>1,2-di-(9Z-octadecenoyl)-sn-glycero-3-phosphocholine + 1-hexadecanoyl-sn-glycero-3-phosphocholine = 1-hexadecanoyl-2-(9Z-octadecenoyl)-sn-glycero-3-phosphocholine + 1-(9Z-octadecenoyl)-sn-glycero-3-phosphocholine</text>
        <dbReference type="Rhea" id="RHEA:43816"/>
        <dbReference type="ChEBI" id="CHEBI:28610"/>
        <dbReference type="ChEBI" id="CHEBI:72998"/>
        <dbReference type="ChEBI" id="CHEBI:73001"/>
        <dbReference type="ChEBI" id="CHEBI:74669"/>
    </reaction>
    <physiologicalReaction direction="left-to-right" evidence="10">
        <dbReference type="Rhea" id="RHEA:43817"/>
    </physiologicalReaction>
    <physiologicalReaction direction="right-to-left" evidence="24">
        <dbReference type="Rhea" id="RHEA:43818"/>
    </physiologicalReaction>
</comment>
<comment type="catalytic activity">
    <molecule>Isoform A</molecule>
    <reaction evidence="12">
        <text>1,2-di-(9Z,12Z-octadecadienoyl)-sn-glycero-3-phosphocholine + 1-(9Z-octadecenoyl)-sn-glycero-3-phosphocholine = 1-(9Z)-octadecenoyl-2-(9Z,12Z)-octadecadienoyl-sn-glycero-3-phosphocholine + 1-(9Z,12Z)-octadecadienoyl-sn-glycero-3-phosphocholine</text>
        <dbReference type="Rhea" id="RHEA:67432"/>
        <dbReference type="ChEBI" id="CHEBI:28610"/>
        <dbReference type="ChEBI" id="CHEBI:28733"/>
        <dbReference type="ChEBI" id="CHEBI:42027"/>
        <dbReference type="ChEBI" id="CHEBI:74670"/>
    </reaction>
    <physiologicalReaction direction="left-to-right" evidence="12">
        <dbReference type="Rhea" id="RHEA:67433"/>
    </physiologicalReaction>
    <physiologicalReaction direction="right-to-left" evidence="26">
        <dbReference type="Rhea" id="RHEA:67434"/>
    </physiologicalReaction>
</comment>
<comment type="catalytic activity">
    <molecule>Isoform A</molecule>
    <reaction evidence="12">
        <text>1,2-di-(9Z,12Z,15Z-octadecatrienoyl)-sn-glycero-3-phosphocholine + 1-tetradecanoyl-sn-glycero-3-phosphocholine = 1-tetradecanoyl-2-(9Z,12Z,15Z-octadecatrienoyl)-sn-glycero-3-phosphocholine + 1-(9Z,12Z,15Z-octadecatrienoyl)-sn-glycero-3-phosphocholine</text>
        <dbReference type="Rhea" id="RHEA:67500"/>
        <dbReference type="ChEBI" id="CHEBI:64489"/>
        <dbReference type="ChEBI" id="CHEBI:86095"/>
        <dbReference type="ChEBI" id="CHEBI:86161"/>
        <dbReference type="ChEBI" id="CHEBI:133456"/>
    </reaction>
    <physiologicalReaction direction="left-to-right" evidence="12">
        <dbReference type="Rhea" id="RHEA:67501"/>
    </physiologicalReaction>
    <physiologicalReaction direction="right-to-left" evidence="26">
        <dbReference type="Rhea" id="RHEA:67502"/>
    </physiologicalReaction>
</comment>
<comment type="catalytic activity">
    <molecule>Isoform A</molecule>
    <reaction evidence="12">
        <text>1-nonadecanoyl-sn-glycero-3-phosphocholine + 1-octadecanoyl-2-(9Z-octadecenoyl)-sn-glycero-3-phosphocholine = 1-nonadecanoyl-2-(9Z-octadecenoyl)-sn-glycero-3-phosphocholine + 1-octadecanoyl-sn-glycero-3-phosphocholine</text>
        <dbReference type="Rhea" id="RHEA:67504"/>
        <dbReference type="ChEBI" id="CHEBI:73858"/>
        <dbReference type="ChEBI" id="CHEBI:75034"/>
        <dbReference type="ChEBI" id="CHEBI:131989"/>
        <dbReference type="ChEBI" id="CHEBI:172373"/>
    </reaction>
    <physiologicalReaction direction="left-to-right" evidence="12">
        <dbReference type="Rhea" id="RHEA:67505"/>
    </physiologicalReaction>
    <physiologicalReaction direction="right-to-left" evidence="26">
        <dbReference type="Rhea" id="RHEA:67506"/>
    </physiologicalReaction>
</comment>
<comment type="catalytic activity">
    <molecule>Isoform A</molecule>
    <reaction evidence="12">
        <text>1-(9Z)-octadecenoyl-2-octadecanoyl-sn-glycero-3-phosphocholine + 1-nonadecanoyl-sn-glycero-3-phosphocholine = 2-octadecanoyl-sn-glycero-3-phosphocholine + 1-nonadecanoyl-2-(9Z-octadecenoyl)-sn-glycero-3-phosphocholine</text>
        <dbReference type="Rhea" id="RHEA:67508"/>
        <dbReference type="ChEBI" id="CHEBI:76073"/>
        <dbReference type="ChEBI" id="CHEBI:76076"/>
        <dbReference type="ChEBI" id="CHEBI:131989"/>
        <dbReference type="ChEBI" id="CHEBI:172373"/>
    </reaction>
    <physiologicalReaction direction="left-to-right" evidence="12">
        <dbReference type="Rhea" id="RHEA:67509"/>
    </physiologicalReaction>
    <physiologicalReaction direction="right-to-left" evidence="26">
        <dbReference type="Rhea" id="RHEA:67510"/>
    </physiologicalReaction>
</comment>
<comment type="pathway">
    <text evidence="23 24 25 26">Phospholipid metabolism.</text>
</comment>
<comment type="subunit">
    <text evidence="13">Associates with multiple protein complexes (PubMed:25598000). Association with large protein complexes occurs only in the presence of cardiolipin (PubMed:25598000).</text>
</comment>
<comment type="subcellular location">
    <subcellularLocation>
        <location evidence="2">Mitochondrion outer membrane</location>
        <topology evidence="2">Peripheral membrane protein</topology>
        <orientation evidence="2">Intermembrane side</orientation>
    </subcellularLocation>
    <subcellularLocation>
        <location evidence="2">Mitochondrion inner membrane</location>
        <topology evidence="2">Peripheral membrane protein</topology>
        <orientation evidence="2">Intermembrane side</orientation>
    </subcellularLocation>
    <subcellularLocation>
        <location evidence="7 12">Mitochondrion</location>
    </subcellularLocation>
</comment>
<comment type="subcellular location">
    <molecule>Isoform A</molecule>
    <subcellularLocation>
        <location evidence="11">Mitochondrion membrane</location>
    </subcellularLocation>
</comment>
<comment type="subcellular location">
    <molecule>Isoform B</molecule>
    <subcellularLocation>
        <location evidence="11">Mitochondrion membrane</location>
    </subcellularLocation>
    <subcellularLocation>
        <location evidence="11">Golgi apparatus membrane</location>
    </subcellularLocation>
    <subcellularLocation>
        <location evidence="11">Endoplasmic reticulum membrane</location>
    </subcellularLocation>
</comment>
<comment type="subcellular location">
    <molecule>Isoform C</molecule>
    <subcellularLocation>
        <location evidence="11">Mitochondrion membrane</location>
    </subcellularLocation>
</comment>
<comment type="alternative products">
    <event type="alternative splicing"/>
    <isoform>
        <id>Q9V6G5-1</id>
        <name>A</name>
        <sequence type="displayed"/>
    </isoform>
    <isoform>
        <id>Q9V6G5-2</id>
        <name>B</name>
        <sequence type="described" ref="VSP_004450"/>
    </isoform>
    <isoform>
        <id>Q9V6G5-3</id>
        <name>C</name>
        <sequence type="described" ref="VSP_007017"/>
    </isoform>
</comment>
<comment type="domain">
    <text evidence="3">The HXXXXD motif is essential for acyltransferase activity.</text>
</comment>
<comment type="disruption phenotype">
    <text evidence="6 7 8 9 11 14 15">Cardiolipin (CL) deficiency, faster turnover, abnormal CL fatty acyl composition and abnormal muscle mitochondria (PubMed:16855048, PubMed:17082194, PubMed:19114128, PubMed:19700766, PubMed:31110016). Poor motor performance of flight muscles (PubMed:16855048, PubMed:19114128, PubMed:29405656). Significantly reduced climbing speed and endurance which does not improve with endurance training in contrast to wild-type flies (PubMed:16855048, PubMed:29405656). Normal response to cardiac pacing (PubMed:29405656). Male sterility (PubMed:19164547). Male-sterile phenotype can be suppressed by genetic inactivation of iPLA2-VIA, which prevents CL depletion and monolyso-CL accumulation without correcting the abnormal CL acyl composition, suggesting that the abnormal levels of CL and/or monolyso-CL are important pathogenetic factors (PubMed:19164547).</text>
</comment>
<comment type="miscellaneous">
    <text evidence="2">The enzyme was named after a masochistic character Tafazzi, once popular on Italian television, apparently due to the difficulty encountered for its identification and characterization.</text>
</comment>
<comment type="similarity">
    <text evidence="22">Belongs to the taffazin family.</text>
</comment>
<comment type="sequence caution" evidence="22">
    <conflict type="frameshift">
        <sequence resource="EMBL-CDS" id="AAD48409"/>
    </conflict>
</comment>
<protein>
    <recommendedName>
        <fullName evidence="16 17 18 19 20 21">Tafazzin</fullName>
        <shortName evidence="16 18 19 21">TAZ</shortName>
        <shortName>dTAZ</shortName>
        <ecNumber evidence="7 10 12">2.3.1.-</ecNumber>
    </recommendedName>
</protein>